<comment type="function">
    <text evidence="1">Catalyzes the condensation of ATP and 5-phosphoribose 1-diphosphate to form N'-(5'-phosphoribosyl)-ATP (PR-ATP). Has a crucial role in the pathway because the rate of histidine biosynthesis seems to be controlled primarily by regulation of HisG enzymatic activity.</text>
</comment>
<comment type="catalytic activity">
    <reaction evidence="1">
        <text>1-(5-phospho-beta-D-ribosyl)-ATP + diphosphate = 5-phospho-alpha-D-ribose 1-diphosphate + ATP</text>
        <dbReference type="Rhea" id="RHEA:18473"/>
        <dbReference type="ChEBI" id="CHEBI:30616"/>
        <dbReference type="ChEBI" id="CHEBI:33019"/>
        <dbReference type="ChEBI" id="CHEBI:58017"/>
        <dbReference type="ChEBI" id="CHEBI:73183"/>
        <dbReference type="EC" id="2.4.2.17"/>
    </reaction>
</comment>
<comment type="cofactor">
    <cofactor evidence="1">
        <name>Mg(2+)</name>
        <dbReference type="ChEBI" id="CHEBI:18420"/>
    </cofactor>
</comment>
<comment type="activity regulation">
    <text evidence="1">Feedback inhibited by histidine.</text>
</comment>
<comment type="pathway">
    <text evidence="1">Amino-acid biosynthesis; L-histidine biosynthesis; L-histidine from 5-phospho-alpha-D-ribose 1-diphosphate: step 1/9.</text>
</comment>
<comment type="subcellular location">
    <subcellularLocation>
        <location evidence="1">Cytoplasm</location>
    </subcellularLocation>
</comment>
<comment type="similarity">
    <text evidence="1">Belongs to the ATP phosphoribosyltransferase family. Long subfamily.</text>
</comment>
<keyword id="KW-0028">Amino-acid biosynthesis</keyword>
<keyword id="KW-0067">ATP-binding</keyword>
<keyword id="KW-0963">Cytoplasm</keyword>
<keyword id="KW-0328">Glycosyltransferase</keyword>
<keyword id="KW-0368">Histidine biosynthesis</keyword>
<keyword id="KW-0460">Magnesium</keyword>
<keyword id="KW-0479">Metal-binding</keyword>
<keyword id="KW-0547">Nucleotide-binding</keyword>
<keyword id="KW-1185">Reference proteome</keyword>
<keyword id="KW-0808">Transferase</keyword>
<evidence type="ECO:0000255" key="1">
    <source>
        <dbReference type="HAMAP-Rule" id="MF_00079"/>
    </source>
</evidence>
<organism>
    <name type="scientific">Afipia carboxidovorans (strain ATCC 49405 / DSM 1227 / KCTC 32145 / OM5)</name>
    <name type="common">Oligotropha carboxidovorans</name>
    <dbReference type="NCBI Taxonomy" id="504832"/>
    <lineage>
        <taxon>Bacteria</taxon>
        <taxon>Pseudomonadati</taxon>
        <taxon>Pseudomonadota</taxon>
        <taxon>Alphaproteobacteria</taxon>
        <taxon>Hyphomicrobiales</taxon>
        <taxon>Nitrobacteraceae</taxon>
        <taxon>Afipia</taxon>
    </lineage>
</organism>
<protein>
    <recommendedName>
        <fullName evidence="1">ATP phosphoribosyltransferase</fullName>
        <shortName evidence="1">ATP-PRT</shortName>
        <shortName evidence="1">ATP-PRTase</shortName>
        <ecNumber evidence="1">2.4.2.17</ecNumber>
    </recommendedName>
</protein>
<proteinExistence type="inferred from homology"/>
<reference key="1">
    <citation type="journal article" date="2008" name="J. Bacteriol.">
        <title>Genome sequence of the chemolithoautotrophic bacterium Oligotropha carboxidovorans OM5T.</title>
        <authorList>
            <person name="Paul D."/>
            <person name="Bridges S."/>
            <person name="Burgess S.C."/>
            <person name="Dandass Y."/>
            <person name="Lawrence M.L."/>
        </authorList>
    </citation>
    <scope>NUCLEOTIDE SEQUENCE [LARGE SCALE GENOMIC DNA]</scope>
    <source>
        <strain>ATCC 49405 / DSM 1227 / KCTC 32145 / OM5</strain>
    </source>
</reference>
<reference key="2">
    <citation type="journal article" date="2011" name="J. Bacteriol.">
        <title>Complete genome sequences of the chemolithoautotrophic Oligotropha carboxidovorans strains OM4 and OM5.</title>
        <authorList>
            <person name="Volland S."/>
            <person name="Rachinger M."/>
            <person name="Strittmatter A."/>
            <person name="Daniel R."/>
            <person name="Gottschalk G."/>
            <person name="Meyer O."/>
        </authorList>
    </citation>
    <scope>NUCLEOTIDE SEQUENCE [LARGE SCALE GENOMIC DNA]</scope>
    <source>
        <strain>ATCC 49405 / DSM 1227 / KCTC 32145 / OM5</strain>
    </source>
</reference>
<accession>B6JIW1</accession>
<accession>F8BZR9</accession>
<gene>
    <name evidence="1" type="primary">hisG</name>
    <name type="ordered locus">OCAR_7263</name>
    <name type="ordered locus">OCA5_c08520</name>
</gene>
<name>HIS1_AFIC5</name>
<dbReference type="EC" id="2.4.2.17" evidence="1"/>
<dbReference type="EMBL" id="CP001196">
    <property type="protein sequence ID" value="ACI94367.1"/>
    <property type="molecule type" value="Genomic_DNA"/>
</dbReference>
<dbReference type="EMBL" id="CP002826">
    <property type="protein sequence ID" value="AEI05574.1"/>
    <property type="molecule type" value="Genomic_DNA"/>
</dbReference>
<dbReference type="RefSeq" id="WP_012564393.1">
    <property type="nucleotide sequence ID" value="NC_015684.1"/>
</dbReference>
<dbReference type="SMR" id="B6JIW1"/>
<dbReference type="STRING" id="504832.OCA5_c08520"/>
<dbReference type="KEGG" id="oca:OCAR_7263"/>
<dbReference type="KEGG" id="ocg:OCA5_c08520"/>
<dbReference type="PATRIC" id="fig|504832.7.peg.899"/>
<dbReference type="eggNOG" id="COG0040">
    <property type="taxonomic scope" value="Bacteria"/>
</dbReference>
<dbReference type="HOGENOM" id="CLU_038115_0_1_5"/>
<dbReference type="OrthoDB" id="9806435at2"/>
<dbReference type="UniPathway" id="UPA00031">
    <property type="reaction ID" value="UER00006"/>
</dbReference>
<dbReference type="Proteomes" id="UP000007730">
    <property type="component" value="Chromosome"/>
</dbReference>
<dbReference type="GO" id="GO:0005737">
    <property type="term" value="C:cytoplasm"/>
    <property type="evidence" value="ECO:0007669"/>
    <property type="project" value="UniProtKB-SubCell"/>
</dbReference>
<dbReference type="GO" id="GO:0005524">
    <property type="term" value="F:ATP binding"/>
    <property type="evidence" value="ECO:0007669"/>
    <property type="project" value="UniProtKB-KW"/>
</dbReference>
<dbReference type="GO" id="GO:0003879">
    <property type="term" value="F:ATP phosphoribosyltransferase activity"/>
    <property type="evidence" value="ECO:0007669"/>
    <property type="project" value="UniProtKB-UniRule"/>
</dbReference>
<dbReference type="GO" id="GO:0000287">
    <property type="term" value="F:magnesium ion binding"/>
    <property type="evidence" value="ECO:0007669"/>
    <property type="project" value="UniProtKB-UniRule"/>
</dbReference>
<dbReference type="GO" id="GO:0000105">
    <property type="term" value="P:L-histidine biosynthetic process"/>
    <property type="evidence" value="ECO:0007669"/>
    <property type="project" value="UniProtKB-UniRule"/>
</dbReference>
<dbReference type="CDD" id="cd13593">
    <property type="entry name" value="PBP2_HisGL3"/>
    <property type="match status" value="1"/>
</dbReference>
<dbReference type="Gene3D" id="3.40.190.10">
    <property type="entry name" value="Periplasmic binding protein-like II"/>
    <property type="match status" value="2"/>
</dbReference>
<dbReference type="HAMAP" id="MF_00079">
    <property type="entry name" value="HisG_Long"/>
    <property type="match status" value="1"/>
</dbReference>
<dbReference type="InterPro" id="IPR020621">
    <property type="entry name" value="ATP-PRT_HisG_long"/>
</dbReference>
<dbReference type="InterPro" id="IPR013820">
    <property type="entry name" value="ATP_PRibTrfase_cat"/>
</dbReference>
<dbReference type="InterPro" id="IPR018198">
    <property type="entry name" value="ATP_PRibTrfase_CS"/>
</dbReference>
<dbReference type="InterPro" id="IPR001348">
    <property type="entry name" value="ATP_PRibTrfase_HisG"/>
</dbReference>
<dbReference type="NCBIfam" id="TIGR00070">
    <property type="entry name" value="hisG"/>
    <property type="match status" value="1"/>
</dbReference>
<dbReference type="PANTHER" id="PTHR21403:SF8">
    <property type="entry name" value="ATP PHOSPHORIBOSYLTRANSFERASE"/>
    <property type="match status" value="1"/>
</dbReference>
<dbReference type="PANTHER" id="PTHR21403">
    <property type="entry name" value="ATP PHOSPHORIBOSYLTRANSFERASE ATP-PRTASE"/>
    <property type="match status" value="1"/>
</dbReference>
<dbReference type="Pfam" id="PF01634">
    <property type="entry name" value="HisG"/>
    <property type="match status" value="1"/>
</dbReference>
<dbReference type="SUPFAM" id="SSF53850">
    <property type="entry name" value="Periplasmic binding protein-like II"/>
    <property type="match status" value="1"/>
</dbReference>
<dbReference type="PROSITE" id="PS01316">
    <property type="entry name" value="ATP_P_PHORIBOSYLTR"/>
    <property type="match status" value="1"/>
</dbReference>
<feature type="chain" id="PRO_1000092739" description="ATP phosphoribosyltransferase">
    <location>
        <begin position="1"/>
        <end position="325"/>
    </location>
</feature>
<sequence length="325" mass="34816">MTTPFVLAVPSKGRLQENADAFFGRAGLTLAKPRGARDYRGTITGLDNVEIAYLSASEIAAQLARGQVHLGITGEDLVRETIADADKRVMLIEGLGFGYANVVVAVPQAWIDVRTMADLDDVATSFRVKHNRRMRVATKYINLTRHFFALHGIVDYRIVESAGATEGAPASGAAELIVDITTTGATLAANGLKMLDDGMMLRSQANLVASRAADWTPEARETARVILDHIASRARAAKYKEVRTCLPGCDAALLSEIEQHFGALAPFGTPPAGGILTLHCPPAQLYPLGTLLRARGAETVSIGSLDYVMARDNPLFSRLEAFLGA</sequence>